<accession>Q6MSR8</accession>
<proteinExistence type="inferred from homology"/>
<dbReference type="EC" id="3.5.3.12" evidence="1"/>
<dbReference type="EMBL" id="BX293980">
    <property type="protein sequence ID" value="CAE77320.1"/>
    <property type="molecule type" value="Genomic_DNA"/>
</dbReference>
<dbReference type="RefSeq" id="NP_975678.1">
    <property type="nucleotide sequence ID" value="NC_005364.2"/>
</dbReference>
<dbReference type="RefSeq" id="WP_011166871.1">
    <property type="nucleotide sequence ID" value="NC_005364.2"/>
</dbReference>
<dbReference type="SMR" id="Q6MSR8"/>
<dbReference type="STRING" id="272632.MSC_0701"/>
<dbReference type="KEGG" id="mmy:MSC_0701"/>
<dbReference type="PATRIC" id="fig|272632.4.peg.754"/>
<dbReference type="eggNOG" id="COG2957">
    <property type="taxonomic scope" value="Bacteria"/>
</dbReference>
<dbReference type="HOGENOM" id="CLU_037682_1_0_14"/>
<dbReference type="Proteomes" id="UP000001016">
    <property type="component" value="Chromosome"/>
</dbReference>
<dbReference type="GO" id="GO:0047632">
    <property type="term" value="F:agmatine deiminase activity"/>
    <property type="evidence" value="ECO:0007669"/>
    <property type="project" value="UniProtKB-UniRule"/>
</dbReference>
<dbReference type="GO" id="GO:0004668">
    <property type="term" value="F:protein-arginine deiminase activity"/>
    <property type="evidence" value="ECO:0007669"/>
    <property type="project" value="InterPro"/>
</dbReference>
<dbReference type="GO" id="GO:0009446">
    <property type="term" value="P:putrescine biosynthetic process"/>
    <property type="evidence" value="ECO:0007669"/>
    <property type="project" value="InterPro"/>
</dbReference>
<dbReference type="Gene3D" id="3.75.10.10">
    <property type="entry name" value="L-arginine/glycine Amidinotransferase, Chain A"/>
    <property type="match status" value="1"/>
</dbReference>
<dbReference type="HAMAP" id="MF_01841">
    <property type="entry name" value="Agmatine_deimin"/>
    <property type="match status" value="1"/>
</dbReference>
<dbReference type="InterPro" id="IPR017754">
    <property type="entry name" value="Agmatine_deiminase"/>
</dbReference>
<dbReference type="InterPro" id="IPR007466">
    <property type="entry name" value="Peptidyl-Arg-deiminase_porph"/>
</dbReference>
<dbReference type="NCBIfam" id="TIGR03380">
    <property type="entry name" value="agmatine_aguA"/>
    <property type="match status" value="1"/>
</dbReference>
<dbReference type="NCBIfam" id="NF010070">
    <property type="entry name" value="PRK13551.1"/>
    <property type="match status" value="1"/>
</dbReference>
<dbReference type="PANTHER" id="PTHR31377">
    <property type="entry name" value="AGMATINE DEIMINASE-RELATED"/>
    <property type="match status" value="1"/>
</dbReference>
<dbReference type="PANTHER" id="PTHR31377:SF0">
    <property type="entry name" value="AGMATINE DEIMINASE-RELATED"/>
    <property type="match status" value="1"/>
</dbReference>
<dbReference type="Pfam" id="PF04371">
    <property type="entry name" value="PAD_porph"/>
    <property type="match status" value="1"/>
</dbReference>
<dbReference type="SUPFAM" id="SSF55909">
    <property type="entry name" value="Pentein"/>
    <property type="match status" value="1"/>
</dbReference>
<reference key="1">
    <citation type="journal article" date="2004" name="Genome Res.">
        <title>The genome sequence of Mycoplasma mycoides subsp. mycoides SC type strain PG1T, the causative agent of contagious bovine pleuropneumonia (CBPP).</title>
        <authorList>
            <person name="Westberg J."/>
            <person name="Persson A."/>
            <person name="Holmberg A."/>
            <person name="Goesmann A."/>
            <person name="Lundeberg J."/>
            <person name="Johansson K.-E."/>
            <person name="Pettersson B."/>
            <person name="Uhlen M."/>
        </authorList>
    </citation>
    <scope>NUCLEOTIDE SEQUENCE [LARGE SCALE GENOMIC DNA]</scope>
    <source>
        <strain>CCUG 32753 / NCTC 10114 / PG1</strain>
    </source>
</reference>
<sequence length="364" mass="41717">MSKKMNSTPKKDGFWMPGEWEKHDQCWMIWPERSDNWRLGAKPAQRVFVNVANAIAKYEKVTMLVSHQQFENARNLLDQNVRVIEMSNDDSWMRDVGPTIVKNKDGEIRGVDWVFNAWEGFKGGLYFPWDKDDAIARKVCEICNIDYYRTDFVLEGGSIHTDGDGTLYTTEECLLNENRNPDLTKEQIEENLKEYCGVEKVIWLPLGVYNDETNGHVDNLLNVVSPGHVVLTWTDDTTDPQYERSKLAYDILTNTLDAKGRKIKVTKLHQPGPLFITKEEAEGIDVCDTMSREPEQRMPASYANYYIANNAIILPIFGDKYDDLAVKTLQSVYPNHKIETVMAREILLGGGNIHCITQQQPTTK</sequence>
<organism>
    <name type="scientific">Mycoplasma mycoides subsp. mycoides SC (strain CCUG 32753 / NCTC 10114 / PG1)</name>
    <dbReference type="NCBI Taxonomy" id="272632"/>
    <lineage>
        <taxon>Bacteria</taxon>
        <taxon>Bacillati</taxon>
        <taxon>Mycoplasmatota</taxon>
        <taxon>Mollicutes</taxon>
        <taxon>Mycoplasmataceae</taxon>
        <taxon>Mycoplasma</taxon>
    </lineage>
</organism>
<gene>
    <name evidence="1" type="primary">aguA</name>
    <name type="ordered locus">MSC_0701</name>
</gene>
<protein>
    <recommendedName>
        <fullName evidence="1">Putative agmatine deiminase</fullName>
        <ecNumber evidence="1">3.5.3.12</ecNumber>
    </recommendedName>
    <alternativeName>
        <fullName evidence="1">Agmatine iminohydrolase</fullName>
    </alternativeName>
</protein>
<evidence type="ECO:0000255" key="1">
    <source>
        <dbReference type="HAMAP-Rule" id="MF_01841"/>
    </source>
</evidence>
<feature type="chain" id="PRO_0000194335" description="Putative agmatine deiminase">
    <location>
        <begin position="1"/>
        <end position="364"/>
    </location>
</feature>
<feature type="active site" description="Amidino-cysteine intermediate" evidence="1">
    <location>
        <position position="355"/>
    </location>
</feature>
<name>AGUA_MYCMS</name>
<comment type="catalytic activity">
    <reaction evidence="1">
        <text>agmatine + H2O = N-carbamoylputrescine + NH4(+)</text>
        <dbReference type="Rhea" id="RHEA:18037"/>
        <dbReference type="ChEBI" id="CHEBI:15377"/>
        <dbReference type="ChEBI" id="CHEBI:28938"/>
        <dbReference type="ChEBI" id="CHEBI:58145"/>
        <dbReference type="ChEBI" id="CHEBI:58318"/>
        <dbReference type="EC" id="3.5.3.12"/>
    </reaction>
</comment>
<comment type="similarity">
    <text evidence="1">Belongs to the agmatine deiminase family.</text>
</comment>
<keyword id="KW-0378">Hydrolase</keyword>
<keyword id="KW-1185">Reference proteome</keyword>